<comment type="function">
    <text evidence="1">Catalyzes the reversible conversion of 2-phosphoglycerate (2-PG) into phosphoenolpyruvate (PEP). It is essential for the degradation of carbohydrates via glycolysis.</text>
</comment>
<comment type="catalytic activity">
    <reaction evidence="1">
        <text>(2R)-2-phosphoglycerate = phosphoenolpyruvate + H2O</text>
        <dbReference type="Rhea" id="RHEA:10164"/>
        <dbReference type="ChEBI" id="CHEBI:15377"/>
        <dbReference type="ChEBI" id="CHEBI:58289"/>
        <dbReference type="ChEBI" id="CHEBI:58702"/>
        <dbReference type="EC" id="4.2.1.11"/>
    </reaction>
</comment>
<comment type="cofactor">
    <cofactor evidence="1">
        <name>Mg(2+)</name>
        <dbReference type="ChEBI" id="CHEBI:18420"/>
    </cofactor>
    <text evidence="1">Binds a second Mg(2+) ion via substrate during catalysis.</text>
</comment>
<comment type="pathway">
    <text evidence="1">Carbohydrate degradation; glycolysis; pyruvate from D-glyceraldehyde 3-phosphate: step 4/5.</text>
</comment>
<comment type="subcellular location">
    <subcellularLocation>
        <location evidence="1">Cytoplasm</location>
    </subcellularLocation>
    <subcellularLocation>
        <location evidence="1">Secreted</location>
    </subcellularLocation>
    <subcellularLocation>
        <location evidence="1">Cell surface</location>
    </subcellularLocation>
    <text evidence="1">Fractions of enolase are present in both the cytoplasm and on the cell surface.</text>
</comment>
<comment type="similarity">
    <text evidence="1">Belongs to the enolase family.</text>
</comment>
<accession>A1V5K2</accession>
<gene>
    <name evidence="1" type="primary">eno</name>
    <name type="ordered locus">BMASAVP1_A2193</name>
</gene>
<reference key="1">
    <citation type="journal article" date="2010" name="Genome Biol. Evol.">
        <title>Continuing evolution of Burkholderia mallei through genome reduction and large-scale rearrangements.</title>
        <authorList>
            <person name="Losada L."/>
            <person name="Ronning C.M."/>
            <person name="DeShazer D."/>
            <person name="Woods D."/>
            <person name="Fedorova N."/>
            <person name="Kim H.S."/>
            <person name="Shabalina S.A."/>
            <person name="Pearson T.R."/>
            <person name="Brinkac L."/>
            <person name="Tan P."/>
            <person name="Nandi T."/>
            <person name="Crabtree J."/>
            <person name="Badger J."/>
            <person name="Beckstrom-Sternberg S."/>
            <person name="Saqib M."/>
            <person name="Schutzer S.E."/>
            <person name="Keim P."/>
            <person name="Nierman W.C."/>
        </authorList>
    </citation>
    <scope>NUCLEOTIDE SEQUENCE [LARGE SCALE GENOMIC DNA]</scope>
    <source>
        <strain>SAVP1</strain>
    </source>
</reference>
<organism>
    <name type="scientific">Burkholderia mallei (strain SAVP1)</name>
    <dbReference type="NCBI Taxonomy" id="320388"/>
    <lineage>
        <taxon>Bacteria</taxon>
        <taxon>Pseudomonadati</taxon>
        <taxon>Pseudomonadota</taxon>
        <taxon>Betaproteobacteria</taxon>
        <taxon>Burkholderiales</taxon>
        <taxon>Burkholderiaceae</taxon>
        <taxon>Burkholderia</taxon>
        <taxon>pseudomallei group</taxon>
    </lineage>
</organism>
<feature type="chain" id="PRO_1000019193" description="Enolase">
    <location>
        <begin position="1"/>
        <end position="427"/>
    </location>
</feature>
<feature type="active site" description="Proton donor" evidence="1">
    <location>
        <position position="205"/>
    </location>
</feature>
<feature type="active site" description="Proton acceptor" evidence="1">
    <location>
        <position position="337"/>
    </location>
</feature>
<feature type="binding site" evidence="1">
    <location>
        <position position="163"/>
    </location>
    <ligand>
        <name>(2R)-2-phosphoglycerate</name>
        <dbReference type="ChEBI" id="CHEBI:58289"/>
    </ligand>
</feature>
<feature type="binding site" evidence="1">
    <location>
        <position position="242"/>
    </location>
    <ligand>
        <name>Mg(2+)</name>
        <dbReference type="ChEBI" id="CHEBI:18420"/>
    </ligand>
</feature>
<feature type="binding site" evidence="1">
    <location>
        <position position="285"/>
    </location>
    <ligand>
        <name>Mg(2+)</name>
        <dbReference type="ChEBI" id="CHEBI:18420"/>
    </ligand>
</feature>
<feature type="binding site" evidence="1">
    <location>
        <position position="312"/>
    </location>
    <ligand>
        <name>Mg(2+)</name>
        <dbReference type="ChEBI" id="CHEBI:18420"/>
    </ligand>
</feature>
<feature type="binding site" evidence="1">
    <location>
        <position position="337"/>
    </location>
    <ligand>
        <name>(2R)-2-phosphoglycerate</name>
        <dbReference type="ChEBI" id="CHEBI:58289"/>
    </ligand>
</feature>
<feature type="binding site" evidence="1">
    <location>
        <position position="366"/>
    </location>
    <ligand>
        <name>(2R)-2-phosphoglycerate</name>
        <dbReference type="ChEBI" id="CHEBI:58289"/>
    </ligand>
</feature>
<feature type="binding site" evidence="1">
    <location>
        <position position="367"/>
    </location>
    <ligand>
        <name>(2R)-2-phosphoglycerate</name>
        <dbReference type="ChEBI" id="CHEBI:58289"/>
    </ligand>
</feature>
<feature type="binding site" evidence="1">
    <location>
        <position position="388"/>
    </location>
    <ligand>
        <name>(2R)-2-phosphoglycerate</name>
        <dbReference type="ChEBI" id="CHEBI:58289"/>
    </ligand>
</feature>
<protein>
    <recommendedName>
        <fullName evidence="1">Enolase</fullName>
        <ecNumber evidence="1">4.2.1.11</ecNumber>
    </recommendedName>
    <alternativeName>
        <fullName evidence="1">2-phospho-D-glycerate hydro-lyase</fullName>
    </alternativeName>
    <alternativeName>
        <fullName evidence="1">2-phosphoglycerate dehydratase</fullName>
    </alternativeName>
</protein>
<keyword id="KW-0963">Cytoplasm</keyword>
<keyword id="KW-0324">Glycolysis</keyword>
<keyword id="KW-0456">Lyase</keyword>
<keyword id="KW-0460">Magnesium</keyword>
<keyword id="KW-0479">Metal-binding</keyword>
<keyword id="KW-0964">Secreted</keyword>
<proteinExistence type="inferred from homology"/>
<sequence length="427" mass="45683">MSAIVDIIGREILDSRGNPTVECDVLLESGTMGRAAVPSGASTGSREAIELRDGEAGRYGGKGVLKAVEHINTEISEAIMGLDASEQAFLDKTLLELDGTDNKSRLGANAMLAVSMAVAKAAAEEAGLPLYRYFGGSGAMQLPVPMMNIVNGGAHANNSLDIQEFMIVPVSQPTFREALRCGAEVFHALKKILGDRGMSTAVGDEGGFAPNFGSNDECLSTILQAIEKAGYRAGEDVLLALDCAASEFYHDGKYQLAGEGLQLSSAEFTDYLATLADKFPIVSIEDGMHEGDWDGWKLLTERLGKKVQLVGDDLFVTNTRILKEGIEKGIANSILIKINQIGTLTETFAAIEMAKRARYTAVISHRSGETEDSTIADIAVGLNAGQIKTGSLSRSDRISKYNQLLRIEEDLGDIASYPGKSAFYNLR</sequence>
<evidence type="ECO:0000255" key="1">
    <source>
        <dbReference type="HAMAP-Rule" id="MF_00318"/>
    </source>
</evidence>
<name>ENO_BURMS</name>
<dbReference type="EC" id="4.2.1.11" evidence="1"/>
<dbReference type="EMBL" id="CP000526">
    <property type="protein sequence ID" value="ABM51249.1"/>
    <property type="molecule type" value="Genomic_DNA"/>
</dbReference>
<dbReference type="RefSeq" id="WP_004192585.1">
    <property type="nucleotide sequence ID" value="NC_008785.1"/>
</dbReference>
<dbReference type="SMR" id="A1V5K2"/>
<dbReference type="GeneID" id="93060827"/>
<dbReference type="KEGG" id="bmv:BMASAVP1_A2193"/>
<dbReference type="HOGENOM" id="CLU_031223_2_1_4"/>
<dbReference type="UniPathway" id="UPA00109">
    <property type="reaction ID" value="UER00187"/>
</dbReference>
<dbReference type="GO" id="GO:0009986">
    <property type="term" value="C:cell surface"/>
    <property type="evidence" value="ECO:0007669"/>
    <property type="project" value="UniProtKB-SubCell"/>
</dbReference>
<dbReference type="GO" id="GO:0005576">
    <property type="term" value="C:extracellular region"/>
    <property type="evidence" value="ECO:0007669"/>
    <property type="project" value="UniProtKB-SubCell"/>
</dbReference>
<dbReference type="GO" id="GO:0000015">
    <property type="term" value="C:phosphopyruvate hydratase complex"/>
    <property type="evidence" value="ECO:0007669"/>
    <property type="project" value="InterPro"/>
</dbReference>
<dbReference type="GO" id="GO:0000287">
    <property type="term" value="F:magnesium ion binding"/>
    <property type="evidence" value="ECO:0007669"/>
    <property type="project" value="UniProtKB-UniRule"/>
</dbReference>
<dbReference type="GO" id="GO:0004634">
    <property type="term" value="F:phosphopyruvate hydratase activity"/>
    <property type="evidence" value="ECO:0007669"/>
    <property type="project" value="UniProtKB-UniRule"/>
</dbReference>
<dbReference type="GO" id="GO:0006096">
    <property type="term" value="P:glycolytic process"/>
    <property type="evidence" value="ECO:0007669"/>
    <property type="project" value="UniProtKB-UniRule"/>
</dbReference>
<dbReference type="CDD" id="cd03313">
    <property type="entry name" value="enolase"/>
    <property type="match status" value="1"/>
</dbReference>
<dbReference type="FunFam" id="3.20.20.120:FF:000001">
    <property type="entry name" value="Enolase"/>
    <property type="match status" value="1"/>
</dbReference>
<dbReference type="FunFam" id="3.30.390.10:FF:000001">
    <property type="entry name" value="Enolase"/>
    <property type="match status" value="1"/>
</dbReference>
<dbReference type="Gene3D" id="3.20.20.120">
    <property type="entry name" value="Enolase-like C-terminal domain"/>
    <property type="match status" value="1"/>
</dbReference>
<dbReference type="Gene3D" id="3.30.390.10">
    <property type="entry name" value="Enolase-like, N-terminal domain"/>
    <property type="match status" value="1"/>
</dbReference>
<dbReference type="HAMAP" id="MF_00318">
    <property type="entry name" value="Enolase"/>
    <property type="match status" value="1"/>
</dbReference>
<dbReference type="InterPro" id="IPR000941">
    <property type="entry name" value="Enolase"/>
</dbReference>
<dbReference type="InterPro" id="IPR036849">
    <property type="entry name" value="Enolase-like_C_sf"/>
</dbReference>
<dbReference type="InterPro" id="IPR029017">
    <property type="entry name" value="Enolase-like_N"/>
</dbReference>
<dbReference type="InterPro" id="IPR020810">
    <property type="entry name" value="Enolase_C"/>
</dbReference>
<dbReference type="InterPro" id="IPR020809">
    <property type="entry name" value="Enolase_CS"/>
</dbReference>
<dbReference type="InterPro" id="IPR020811">
    <property type="entry name" value="Enolase_N"/>
</dbReference>
<dbReference type="NCBIfam" id="TIGR01060">
    <property type="entry name" value="eno"/>
    <property type="match status" value="1"/>
</dbReference>
<dbReference type="PANTHER" id="PTHR11902">
    <property type="entry name" value="ENOLASE"/>
    <property type="match status" value="1"/>
</dbReference>
<dbReference type="PANTHER" id="PTHR11902:SF1">
    <property type="entry name" value="ENOLASE"/>
    <property type="match status" value="1"/>
</dbReference>
<dbReference type="Pfam" id="PF00113">
    <property type="entry name" value="Enolase_C"/>
    <property type="match status" value="1"/>
</dbReference>
<dbReference type="Pfam" id="PF03952">
    <property type="entry name" value="Enolase_N"/>
    <property type="match status" value="1"/>
</dbReference>
<dbReference type="PIRSF" id="PIRSF001400">
    <property type="entry name" value="Enolase"/>
    <property type="match status" value="1"/>
</dbReference>
<dbReference type="PRINTS" id="PR00148">
    <property type="entry name" value="ENOLASE"/>
</dbReference>
<dbReference type="SFLD" id="SFLDF00002">
    <property type="entry name" value="enolase"/>
    <property type="match status" value="1"/>
</dbReference>
<dbReference type="SFLD" id="SFLDG00178">
    <property type="entry name" value="enolase"/>
    <property type="match status" value="1"/>
</dbReference>
<dbReference type="SMART" id="SM01192">
    <property type="entry name" value="Enolase_C"/>
    <property type="match status" value="1"/>
</dbReference>
<dbReference type="SMART" id="SM01193">
    <property type="entry name" value="Enolase_N"/>
    <property type="match status" value="1"/>
</dbReference>
<dbReference type="SUPFAM" id="SSF51604">
    <property type="entry name" value="Enolase C-terminal domain-like"/>
    <property type="match status" value="1"/>
</dbReference>
<dbReference type="SUPFAM" id="SSF54826">
    <property type="entry name" value="Enolase N-terminal domain-like"/>
    <property type="match status" value="1"/>
</dbReference>
<dbReference type="PROSITE" id="PS00164">
    <property type="entry name" value="ENOLASE"/>
    <property type="match status" value="1"/>
</dbReference>